<comment type="interaction">
    <interactant intactId="EBI-4397791">
        <id>Q9NNZ3</id>
    </interactant>
    <interactant intactId="EBI-466029">
        <id>P42858</id>
        <label>HTT</label>
    </interactant>
    <organismsDiffer>false</organismsDiffer>
    <experiments>12</experiments>
</comment>
<comment type="interaction">
    <interactant intactId="EBI-4397791">
        <id>Q9NNZ3</id>
    </interactant>
    <interactant intactId="EBI-720609">
        <id>O76024</id>
        <label>WFS1</label>
    </interactant>
    <organismsDiffer>false</organismsDiffer>
    <experiments>3</experiments>
</comment>
<comment type="subcellular location">
    <subcellularLocation>
        <location evidence="4">Membrane</location>
        <topology evidence="4">Single-pass membrane protein</topology>
    </subcellularLocation>
</comment>
<comment type="sequence caution" evidence="4">
    <conflict type="miscellaneous discrepancy">
        <sequence resource="EMBL-CDS" id="AAB82426"/>
    </conflict>
    <text>Several sequence rearrangements.</text>
</comment>
<dbReference type="EMBL" id="AF036874">
    <property type="protein sequence ID" value="AAF97845.1"/>
    <property type="molecule type" value="mRNA"/>
</dbReference>
<dbReference type="EMBL" id="BC044584">
    <property type="protein sequence ID" value="AAH44584.1"/>
    <property type="molecule type" value="mRNA"/>
</dbReference>
<dbReference type="EMBL" id="BC057849">
    <property type="protein sequence ID" value="AAH57849.1"/>
    <property type="molecule type" value="mRNA"/>
</dbReference>
<dbReference type="EMBL" id="AF012106">
    <property type="protein sequence ID" value="AAB82426.1"/>
    <property type="status" value="ALT_SEQ"/>
    <property type="molecule type" value="mRNA"/>
</dbReference>
<dbReference type="CCDS" id="CCDS41666.1"/>
<dbReference type="PIR" id="JE0169">
    <property type="entry name" value="JE0169"/>
</dbReference>
<dbReference type="RefSeq" id="NP_001294909.1">
    <property type="nucleotide sequence ID" value="NM_001307980.1"/>
</dbReference>
<dbReference type="RefSeq" id="NP_001294910.1">
    <property type="nucleotide sequence ID" value="NM_001307981.1"/>
</dbReference>
<dbReference type="RefSeq" id="NP_005519.2">
    <property type="nucleotide sequence ID" value="NM_005528.4"/>
</dbReference>
<dbReference type="RefSeq" id="XP_054224592.1">
    <property type="nucleotide sequence ID" value="XM_054368617.1"/>
</dbReference>
<dbReference type="SMR" id="Q9NNZ3"/>
<dbReference type="BioGRID" id="109570">
    <property type="interactions" value="56"/>
</dbReference>
<dbReference type="FunCoup" id="Q9NNZ3">
    <property type="interactions" value="130"/>
</dbReference>
<dbReference type="IntAct" id="Q9NNZ3">
    <property type="interactions" value="4"/>
</dbReference>
<dbReference type="STRING" id="9606.ENSP00000320548"/>
<dbReference type="iPTMnet" id="Q9NNZ3"/>
<dbReference type="PhosphoSitePlus" id="Q9NNZ3"/>
<dbReference type="BioMuta" id="DNAJC4"/>
<dbReference type="DMDM" id="18203312"/>
<dbReference type="jPOST" id="Q9NNZ3"/>
<dbReference type="MassIVE" id="Q9NNZ3"/>
<dbReference type="PaxDb" id="9606-ENSP00000396896"/>
<dbReference type="PeptideAtlas" id="Q9NNZ3"/>
<dbReference type="ProteomicsDB" id="81878"/>
<dbReference type="Antibodypedia" id="2326">
    <property type="antibodies" value="60 antibodies from 14 providers"/>
</dbReference>
<dbReference type="DNASU" id="3338"/>
<dbReference type="Ensembl" id="ENST00000321685.7">
    <property type="protein sequence ID" value="ENSP00000396896.2"/>
    <property type="gene ID" value="ENSG00000110011.14"/>
</dbReference>
<dbReference type="Ensembl" id="ENST00000628077.3">
    <property type="protein sequence ID" value="ENSP00000486499.2"/>
    <property type="gene ID" value="ENSG00000110011.14"/>
</dbReference>
<dbReference type="GeneID" id="3338"/>
<dbReference type="KEGG" id="hsa:3338"/>
<dbReference type="MANE-Select" id="ENST00000628077.3">
    <property type="protein sequence ID" value="ENSP00000486499.2"/>
    <property type="RefSeq nucleotide sequence ID" value="NM_005528.4"/>
    <property type="RefSeq protein sequence ID" value="NP_005519.2"/>
</dbReference>
<dbReference type="UCSC" id="uc001nys.4">
    <property type="organism name" value="human"/>
</dbReference>
<dbReference type="AGR" id="HGNC:5271"/>
<dbReference type="CTD" id="3338"/>
<dbReference type="DisGeNET" id="3338"/>
<dbReference type="GeneCards" id="DNAJC4"/>
<dbReference type="HGNC" id="HGNC:5271">
    <property type="gene designation" value="DNAJC4"/>
</dbReference>
<dbReference type="HPA" id="ENSG00000110011">
    <property type="expression patterns" value="Tissue enhanced (testis)"/>
</dbReference>
<dbReference type="MIM" id="604189">
    <property type="type" value="gene"/>
</dbReference>
<dbReference type="neXtProt" id="NX_Q9NNZ3"/>
<dbReference type="OpenTargets" id="ENSG00000110011"/>
<dbReference type="PharmGKB" id="PA27421"/>
<dbReference type="VEuPathDB" id="HostDB:ENSG00000110011"/>
<dbReference type="eggNOG" id="KOG0691">
    <property type="taxonomic scope" value="Eukaryota"/>
</dbReference>
<dbReference type="GeneTree" id="ENSGT00510000048574"/>
<dbReference type="HOGENOM" id="CLU_081597_0_0_1"/>
<dbReference type="InParanoid" id="Q9NNZ3"/>
<dbReference type="OMA" id="LCRLWPY"/>
<dbReference type="OrthoDB" id="552049at2759"/>
<dbReference type="PAN-GO" id="Q9NNZ3">
    <property type="GO annotations" value="0 GO annotations based on evolutionary models"/>
</dbReference>
<dbReference type="PhylomeDB" id="Q9NNZ3"/>
<dbReference type="TreeFam" id="TF105163"/>
<dbReference type="PathwayCommons" id="Q9NNZ3"/>
<dbReference type="SignaLink" id="Q9NNZ3"/>
<dbReference type="BioGRID-ORCS" id="3338">
    <property type="hits" value="10 hits in 1166 CRISPR screens"/>
</dbReference>
<dbReference type="ChiTaRS" id="DNAJC4">
    <property type="organism name" value="human"/>
</dbReference>
<dbReference type="GenomeRNAi" id="3338"/>
<dbReference type="Pharos" id="Q9NNZ3">
    <property type="development level" value="Tdark"/>
</dbReference>
<dbReference type="PRO" id="PR:Q9NNZ3"/>
<dbReference type="Proteomes" id="UP000005640">
    <property type="component" value="Chromosome 11"/>
</dbReference>
<dbReference type="RNAct" id="Q9NNZ3">
    <property type="molecule type" value="protein"/>
</dbReference>
<dbReference type="Bgee" id="ENSG00000110011">
    <property type="expression patterns" value="Expressed in right testis and 160 other cell types or tissues"/>
</dbReference>
<dbReference type="ExpressionAtlas" id="Q9NNZ3">
    <property type="expression patterns" value="baseline and differential"/>
</dbReference>
<dbReference type="GO" id="GO:0016020">
    <property type="term" value="C:membrane"/>
    <property type="evidence" value="ECO:0000304"/>
    <property type="project" value="ProtInc"/>
</dbReference>
<dbReference type="GO" id="GO:0051082">
    <property type="term" value="F:unfolded protein binding"/>
    <property type="evidence" value="ECO:0000303"/>
    <property type="project" value="UniProtKB"/>
</dbReference>
<dbReference type="GO" id="GO:0006457">
    <property type="term" value="P:protein folding"/>
    <property type="evidence" value="ECO:0000303"/>
    <property type="project" value="UniProtKB"/>
</dbReference>
<dbReference type="GO" id="GO:0006986">
    <property type="term" value="P:response to unfolded protein"/>
    <property type="evidence" value="ECO:0000304"/>
    <property type="project" value="ProtInc"/>
</dbReference>
<dbReference type="CDD" id="cd06257">
    <property type="entry name" value="DnaJ"/>
    <property type="match status" value="1"/>
</dbReference>
<dbReference type="FunFam" id="1.10.287.110:FF:000087">
    <property type="entry name" value="DnaJ homolog subfamily C member 4"/>
    <property type="match status" value="1"/>
</dbReference>
<dbReference type="Gene3D" id="1.10.287.110">
    <property type="entry name" value="DnaJ domain"/>
    <property type="match status" value="1"/>
</dbReference>
<dbReference type="InterPro" id="IPR052763">
    <property type="entry name" value="DnaJ_C4"/>
</dbReference>
<dbReference type="InterPro" id="IPR001623">
    <property type="entry name" value="DnaJ_domain"/>
</dbReference>
<dbReference type="InterPro" id="IPR036869">
    <property type="entry name" value="J_dom_sf"/>
</dbReference>
<dbReference type="PANTHER" id="PTHR44825">
    <property type="match status" value="1"/>
</dbReference>
<dbReference type="PANTHER" id="PTHR44825:SF1">
    <property type="entry name" value="DNAJ HOMOLOG SUBFAMILY C MEMBER 4"/>
    <property type="match status" value="1"/>
</dbReference>
<dbReference type="Pfam" id="PF00226">
    <property type="entry name" value="DnaJ"/>
    <property type="match status" value="1"/>
</dbReference>
<dbReference type="PRINTS" id="PR00625">
    <property type="entry name" value="JDOMAIN"/>
</dbReference>
<dbReference type="SMART" id="SM00271">
    <property type="entry name" value="DnaJ"/>
    <property type="match status" value="1"/>
</dbReference>
<dbReference type="SUPFAM" id="SSF46565">
    <property type="entry name" value="Chaperone J-domain"/>
    <property type="match status" value="1"/>
</dbReference>
<dbReference type="PROSITE" id="PS50076">
    <property type="entry name" value="DNAJ_2"/>
    <property type="match status" value="1"/>
</dbReference>
<sequence length="241" mass="27593">MPPLLPLRLCRLWPRNPPSRLLGAAAGQRSRPSTYYELLGVHPGASTEEVKRAFFSKSKELHPDRDPGNPSLHSRFVELSEAYRVLSREQSRRSYDDQLRSGSPPKSPRTTVHDKSAHQTHSSWTPPNAQYWSQFHSVRPQGPQLRQQQHKQNKQVLGYCLLLMLAGMGLHYIAFRKVKQMHLNFMDEKDRIITAFYNEARARARANRGILQQERQRLGQRQPPPSEPTQGPEIVPRGAGP</sequence>
<keyword id="KW-0143">Chaperone</keyword>
<keyword id="KW-0472">Membrane</keyword>
<keyword id="KW-1267">Proteomics identification</keyword>
<keyword id="KW-1185">Reference proteome</keyword>
<keyword id="KW-0812">Transmembrane</keyword>
<keyword id="KW-1133">Transmembrane helix</keyword>
<name>DNJC4_HUMAN</name>
<gene>
    <name type="primary">DNAJC4</name>
    <name type="synonym">HSPF2</name>
    <name type="synonym">MCG18</name>
</gene>
<reference key="1">
    <citation type="journal article" date="1998" name="Biochem. Biophys. Res. Commun.">
        <title>Characterisation of a new human and murine member of the DnaJ family of proteins.</title>
        <authorList>
            <person name="Silins G."/>
            <person name="Grimmond S."/>
            <person name="Hayward N."/>
        </authorList>
    </citation>
    <scope>NUCLEOTIDE SEQUENCE [MRNA]</scope>
</reference>
<reference key="2">
    <citation type="journal article" date="2004" name="Genome Res.">
        <title>The status, quality, and expansion of the NIH full-length cDNA project: the Mammalian Gene Collection (MGC).</title>
        <authorList>
            <consortium name="The MGC Project Team"/>
        </authorList>
    </citation>
    <scope>NUCLEOTIDE SEQUENCE [LARGE SCALE MRNA]</scope>
    <source>
        <tissue>Brain</tissue>
        <tissue>Placenta</tissue>
    </source>
</reference>
<reference key="3">
    <citation type="submission" date="1997-07" db="EMBL/GenBank/DDBJ databases">
        <title>Identification and characterisation of a novel human Dnaj gene, HSPF2, mapping to chromosome 11q13.</title>
        <authorList>
            <person name="Lloyd S.E."/>
            <person name="Thakker R.V."/>
        </authorList>
    </citation>
    <scope>PARTIAL NUCLEOTIDE SEQUENCE [MRNA]</scope>
    <source>
        <tissue>Placenta</tissue>
    </source>
</reference>
<feature type="chain" id="PRO_0000071049" description="DnaJ homolog subfamily C member 4">
    <location>
        <begin position="1"/>
        <end position="241"/>
    </location>
</feature>
<feature type="transmembrane region" description="Helical" evidence="1">
    <location>
        <begin position="156"/>
        <end position="175"/>
    </location>
</feature>
<feature type="domain" description="J" evidence="2">
    <location>
        <begin position="34"/>
        <end position="99"/>
    </location>
</feature>
<feature type="region of interest" description="Disordered" evidence="3">
    <location>
        <begin position="88"/>
        <end position="129"/>
    </location>
</feature>
<feature type="region of interest" description="Disordered" evidence="3">
    <location>
        <begin position="212"/>
        <end position="241"/>
    </location>
</feature>
<feature type="compositionally biased region" description="Basic and acidic residues" evidence="3">
    <location>
        <begin position="88"/>
        <end position="99"/>
    </location>
</feature>
<feature type="compositionally biased region" description="Polar residues" evidence="3">
    <location>
        <begin position="119"/>
        <end position="129"/>
    </location>
</feature>
<protein>
    <recommendedName>
        <fullName>DnaJ homolog subfamily C member 4</fullName>
    </recommendedName>
    <alternativeName>
        <fullName>DnaJ-like protein HSPF2</fullName>
    </alternativeName>
    <alternativeName>
        <fullName>Multiple endocrine neoplasia type 1 candidate protein number 18</fullName>
    </alternativeName>
</protein>
<organism>
    <name type="scientific">Homo sapiens</name>
    <name type="common">Human</name>
    <dbReference type="NCBI Taxonomy" id="9606"/>
    <lineage>
        <taxon>Eukaryota</taxon>
        <taxon>Metazoa</taxon>
        <taxon>Chordata</taxon>
        <taxon>Craniata</taxon>
        <taxon>Vertebrata</taxon>
        <taxon>Euteleostomi</taxon>
        <taxon>Mammalia</taxon>
        <taxon>Eutheria</taxon>
        <taxon>Euarchontoglires</taxon>
        <taxon>Primates</taxon>
        <taxon>Haplorrhini</taxon>
        <taxon>Catarrhini</taxon>
        <taxon>Hominidae</taxon>
        <taxon>Homo</taxon>
    </lineage>
</organism>
<evidence type="ECO:0000255" key="1"/>
<evidence type="ECO:0000255" key="2">
    <source>
        <dbReference type="PROSITE-ProRule" id="PRU00286"/>
    </source>
</evidence>
<evidence type="ECO:0000256" key="3">
    <source>
        <dbReference type="SAM" id="MobiDB-lite"/>
    </source>
</evidence>
<evidence type="ECO:0000305" key="4"/>
<accession>Q9NNZ3</accession>
<accession>O14716</accession>
<proteinExistence type="evidence at protein level"/>